<name>XPT_OCEIH</name>
<protein>
    <recommendedName>
        <fullName evidence="1">Xanthine phosphoribosyltransferase</fullName>
        <shortName evidence="1">XPRTase</shortName>
        <ecNumber evidence="1">2.4.2.22</ecNumber>
    </recommendedName>
</protein>
<gene>
    <name evidence="1" type="primary">xpt</name>
    <name type="ordered locus">OB1061</name>
</gene>
<organism>
    <name type="scientific">Oceanobacillus iheyensis (strain DSM 14371 / CIP 107618 / JCM 11309 / KCTC 3954 / HTE831)</name>
    <dbReference type="NCBI Taxonomy" id="221109"/>
    <lineage>
        <taxon>Bacteria</taxon>
        <taxon>Bacillati</taxon>
        <taxon>Bacillota</taxon>
        <taxon>Bacilli</taxon>
        <taxon>Bacillales</taxon>
        <taxon>Bacillaceae</taxon>
        <taxon>Oceanobacillus</taxon>
    </lineage>
</organism>
<keyword id="KW-0963">Cytoplasm</keyword>
<keyword id="KW-0328">Glycosyltransferase</keyword>
<keyword id="KW-0660">Purine salvage</keyword>
<keyword id="KW-1185">Reference proteome</keyword>
<keyword id="KW-0808">Transferase</keyword>
<evidence type="ECO:0000255" key="1">
    <source>
        <dbReference type="HAMAP-Rule" id="MF_01184"/>
    </source>
</evidence>
<comment type="function">
    <text evidence="1">Converts the preformed base xanthine, a product of nucleic acid breakdown, to xanthosine 5'-monophosphate (XMP), so it can be reused for RNA or DNA synthesis.</text>
</comment>
<comment type="catalytic activity">
    <reaction evidence="1">
        <text>XMP + diphosphate = xanthine + 5-phospho-alpha-D-ribose 1-diphosphate</text>
        <dbReference type="Rhea" id="RHEA:10800"/>
        <dbReference type="ChEBI" id="CHEBI:17712"/>
        <dbReference type="ChEBI" id="CHEBI:33019"/>
        <dbReference type="ChEBI" id="CHEBI:57464"/>
        <dbReference type="ChEBI" id="CHEBI:58017"/>
        <dbReference type="EC" id="2.4.2.22"/>
    </reaction>
</comment>
<comment type="pathway">
    <text evidence="1">Purine metabolism; XMP biosynthesis via salvage pathway; XMP from xanthine: step 1/1.</text>
</comment>
<comment type="subunit">
    <text evidence="1">Homodimer.</text>
</comment>
<comment type="subcellular location">
    <subcellularLocation>
        <location evidence="1">Cytoplasm</location>
    </subcellularLocation>
</comment>
<comment type="similarity">
    <text evidence="1">Belongs to the purine/pyrimidine phosphoribosyltransferase family. Xpt subfamily.</text>
</comment>
<proteinExistence type="inferred from homology"/>
<dbReference type="EC" id="2.4.2.22" evidence="1"/>
<dbReference type="EMBL" id="BA000028">
    <property type="protein sequence ID" value="BAC13017.1"/>
    <property type="molecule type" value="Genomic_DNA"/>
</dbReference>
<dbReference type="RefSeq" id="WP_011065462.1">
    <property type="nucleotide sequence ID" value="NC_004193.1"/>
</dbReference>
<dbReference type="SMR" id="Q8CUP6"/>
<dbReference type="STRING" id="221109.gene:10733299"/>
<dbReference type="KEGG" id="oih:OB1061"/>
<dbReference type="eggNOG" id="COG0503">
    <property type="taxonomic scope" value="Bacteria"/>
</dbReference>
<dbReference type="HOGENOM" id="CLU_099015_0_0_9"/>
<dbReference type="OrthoDB" id="9790678at2"/>
<dbReference type="PhylomeDB" id="Q8CUP6"/>
<dbReference type="UniPathway" id="UPA00602">
    <property type="reaction ID" value="UER00658"/>
</dbReference>
<dbReference type="Proteomes" id="UP000000822">
    <property type="component" value="Chromosome"/>
</dbReference>
<dbReference type="GO" id="GO:0005737">
    <property type="term" value="C:cytoplasm"/>
    <property type="evidence" value="ECO:0007669"/>
    <property type="project" value="UniProtKB-SubCell"/>
</dbReference>
<dbReference type="GO" id="GO:0000310">
    <property type="term" value="F:xanthine phosphoribosyltransferase activity"/>
    <property type="evidence" value="ECO:0007669"/>
    <property type="project" value="UniProtKB-UniRule"/>
</dbReference>
<dbReference type="GO" id="GO:0006166">
    <property type="term" value="P:purine ribonucleoside salvage"/>
    <property type="evidence" value="ECO:0007669"/>
    <property type="project" value="UniProtKB-KW"/>
</dbReference>
<dbReference type="GO" id="GO:0046110">
    <property type="term" value="P:xanthine metabolic process"/>
    <property type="evidence" value="ECO:0007669"/>
    <property type="project" value="InterPro"/>
</dbReference>
<dbReference type="GO" id="GO:0032265">
    <property type="term" value="P:XMP salvage"/>
    <property type="evidence" value="ECO:0007669"/>
    <property type="project" value="UniProtKB-UniRule"/>
</dbReference>
<dbReference type="CDD" id="cd06223">
    <property type="entry name" value="PRTases_typeI"/>
    <property type="match status" value="1"/>
</dbReference>
<dbReference type="Gene3D" id="3.40.50.2020">
    <property type="match status" value="1"/>
</dbReference>
<dbReference type="HAMAP" id="MF_01184">
    <property type="entry name" value="XPRTase"/>
    <property type="match status" value="1"/>
</dbReference>
<dbReference type="InterPro" id="IPR000836">
    <property type="entry name" value="PRibTrfase_dom"/>
</dbReference>
<dbReference type="InterPro" id="IPR029057">
    <property type="entry name" value="PRTase-like"/>
</dbReference>
<dbReference type="InterPro" id="IPR050118">
    <property type="entry name" value="Pur/Pyrimidine_PRTase"/>
</dbReference>
<dbReference type="InterPro" id="IPR010079">
    <property type="entry name" value="Xanthine_PRibTrfase"/>
</dbReference>
<dbReference type="NCBIfam" id="NF006671">
    <property type="entry name" value="PRK09219.1"/>
    <property type="match status" value="1"/>
</dbReference>
<dbReference type="NCBIfam" id="TIGR01744">
    <property type="entry name" value="XPRTase"/>
    <property type="match status" value="1"/>
</dbReference>
<dbReference type="PANTHER" id="PTHR43864">
    <property type="entry name" value="HYPOXANTHINE/GUANINE PHOSPHORIBOSYLTRANSFERASE"/>
    <property type="match status" value="1"/>
</dbReference>
<dbReference type="PANTHER" id="PTHR43864:SF1">
    <property type="entry name" value="XANTHINE PHOSPHORIBOSYLTRANSFERASE"/>
    <property type="match status" value="1"/>
</dbReference>
<dbReference type="Pfam" id="PF00156">
    <property type="entry name" value="Pribosyltran"/>
    <property type="match status" value="1"/>
</dbReference>
<dbReference type="SUPFAM" id="SSF53271">
    <property type="entry name" value="PRTase-like"/>
    <property type="match status" value="1"/>
</dbReference>
<sequence>MELLKNKIIEEGRVLSDTVLKVDSFLNHQVDPKLMKQVGEEFAKKFRNTGITKILTIESSGIAPATMTGLELDVPVIFARKRKSLTLTDHLFTAEVYSYTKKTSNEISVSKDFLHEDDIVLVMDDFLANGQAALGLLEIAKQAKATVVGVGIVIEKGFQTGGKQLRDKGIRVESLAIVESLSDGTVRFKEEARI</sequence>
<feature type="chain" id="PRO_0000339722" description="Xanthine phosphoribosyltransferase">
    <location>
        <begin position="1"/>
        <end position="194"/>
    </location>
</feature>
<feature type="binding site" evidence="1">
    <location>
        <position position="20"/>
    </location>
    <ligand>
        <name>xanthine</name>
        <dbReference type="ChEBI" id="CHEBI:17712"/>
    </ligand>
</feature>
<feature type="binding site" evidence="1">
    <location>
        <position position="27"/>
    </location>
    <ligand>
        <name>xanthine</name>
        <dbReference type="ChEBI" id="CHEBI:17712"/>
    </ligand>
</feature>
<feature type="binding site" evidence="1">
    <location>
        <begin position="128"/>
        <end position="132"/>
    </location>
    <ligand>
        <name>5-phospho-alpha-D-ribose 1-diphosphate</name>
        <dbReference type="ChEBI" id="CHEBI:58017"/>
    </ligand>
</feature>
<feature type="binding site" evidence="1">
    <location>
        <position position="156"/>
    </location>
    <ligand>
        <name>xanthine</name>
        <dbReference type="ChEBI" id="CHEBI:17712"/>
    </ligand>
</feature>
<reference key="1">
    <citation type="journal article" date="2002" name="Nucleic Acids Res.">
        <title>Genome sequence of Oceanobacillus iheyensis isolated from the Iheya Ridge and its unexpected adaptive capabilities to extreme environments.</title>
        <authorList>
            <person name="Takami H."/>
            <person name="Takaki Y."/>
            <person name="Uchiyama I."/>
        </authorList>
    </citation>
    <scope>NUCLEOTIDE SEQUENCE [LARGE SCALE GENOMIC DNA]</scope>
    <source>
        <strain>DSM 14371 / CIP 107618 / JCM 11309 / KCTC 3954 / HTE831</strain>
    </source>
</reference>
<accession>Q8CUP6</accession>